<evidence type="ECO:0000250" key="1"/>
<evidence type="ECO:0000256" key="2">
    <source>
        <dbReference type="SAM" id="MobiDB-lite"/>
    </source>
</evidence>
<evidence type="ECO:0000305" key="3"/>
<organism>
    <name type="scientific">Synechococcus sp. (strain ATCC 27144 / PCC 6301 / SAUG 1402/1)</name>
    <name type="common">Anacystis nidulans</name>
    <dbReference type="NCBI Taxonomy" id="269084"/>
    <lineage>
        <taxon>Bacteria</taxon>
        <taxon>Bacillati</taxon>
        <taxon>Cyanobacteriota</taxon>
        <taxon>Cyanophyceae</taxon>
        <taxon>Synechococcales</taxon>
        <taxon>Synechococcaceae</taxon>
        <taxon>Synechococcus</taxon>
    </lineage>
</organism>
<keyword id="KW-0488">Methylation</keyword>
<keyword id="KW-0687">Ribonucleoprotein</keyword>
<keyword id="KW-0689">Ribosomal protein</keyword>
<keyword id="KW-0694">RNA-binding</keyword>
<keyword id="KW-0699">rRNA-binding</keyword>
<keyword id="KW-0820">tRNA-binding</keyword>
<feature type="chain" id="PRO_0000146335" description="Small ribosomal subunit protein uS12">
    <location>
        <begin position="1"/>
        <end position="124"/>
    </location>
</feature>
<feature type="region of interest" description="Disordered" evidence="2">
    <location>
        <begin position="105"/>
        <end position="124"/>
    </location>
</feature>
<feature type="compositionally biased region" description="Basic residues" evidence="2">
    <location>
        <begin position="113"/>
        <end position="124"/>
    </location>
</feature>
<feature type="modified residue" description="3-methylthioaspartic acid" evidence="1">
    <location>
        <position position="89"/>
    </location>
</feature>
<proteinExistence type="inferred from homology"/>
<reference key="1">
    <citation type="journal article" date="1989" name="Mol. Gen. Genet.">
        <title>Genes for the ribosomal proteins S12 and S7 and elongation factors EF-G and EF-Tu of the cyanobacterium, Anacystis nidulans: structural homology between 16S rRNA and S7 mRNA.</title>
        <authorList>
            <person name="Meng B.-Y."/>
            <person name="Shinozaki K."/>
            <person name="Sugiura M."/>
        </authorList>
    </citation>
    <scope>NUCLEOTIDE SEQUENCE [GENOMIC DNA]</scope>
</reference>
<reference key="2">
    <citation type="journal article" date="2007" name="Photosyn. Res.">
        <title>Complete nucleotide sequence of the freshwater unicellular cyanobacterium Synechococcus elongatus PCC 6301 chromosome: gene content and organization.</title>
        <authorList>
            <person name="Sugita C."/>
            <person name="Ogata K."/>
            <person name="Shikata M."/>
            <person name="Jikuya H."/>
            <person name="Takano J."/>
            <person name="Furumichi M."/>
            <person name="Kanehisa M."/>
            <person name="Omata T."/>
            <person name="Sugiura M."/>
            <person name="Sugita M."/>
        </authorList>
    </citation>
    <scope>NUCLEOTIDE SEQUENCE [LARGE SCALE GENOMIC DNA]</scope>
    <source>
        <strain>ATCC 27144 / PCC 6301 / SAUG 1402/1</strain>
    </source>
</reference>
<dbReference type="EMBL" id="X17442">
    <property type="protein sequence ID" value="CAA35493.1"/>
    <property type="molecule type" value="Genomic_DNA"/>
</dbReference>
<dbReference type="EMBL" id="AP008231">
    <property type="protein sequence ID" value="BAD78843.1"/>
    <property type="molecule type" value="Genomic_DNA"/>
</dbReference>
<dbReference type="RefSeq" id="WP_011242965.1">
    <property type="nucleotide sequence ID" value="NZ_CP085785.1"/>
</dbReference>
<dbReference type="SMR" id="P63199"/>
<dbReference type="GeneID" id="72429736"/>
<dbReference type="KEGG" id="syc:syc0653_d"/>
<dbReference type="eggNOG" id="COG0048">
    <property type="taxonomic scope" value="Bacteria"/>
</dbReference>
<dbReference type="Proteomes" id="UP000001175">
    <property type="component" value="Chromosome"/>
</dbReference>
<dbReference type="GO" id="GO:0015935">
    <property type="term" value="C:small ribosomal subunit"/>
    <property type="evidence" value="ECO:0007669"/>
    <property type="project" value="InterPro"/>
</dbReference>
<dbReference type="GO" id="GO:0019843">
    <property type="term" value="F:rRNA binding"/>
    <property type="evidence" value="ECO:0007669"/>
    <property type="project" value="UniProtKB-UniRule"/>
</dbReference>
<dbReference type="GO" id="GO:0003735">
    <property type="term" value="F:structural constituent of ribosome"/>
    <property type="evidence" value="ECO:0007669"/>
    <property type="project" value="InterPro"/>
</dbReference>
<dbReference type="GO" id="GO:0000049">
    <property type="term" value="F:tRNA binding"/>
    <property type="evidence" value="ECO:0007669"/>
    <property type="project" value="UniProtKB-UniRule"/>
</dbReference>
<dbReference type="GO" id="GO:0006412">
    <property type="term" value="P:translation"/>
    <property type="evidence" value="ECO:0007669"/>
    <property type="project" value="UniProtKB-UniRule"/>
</dbReference>
<dbReference type="CDD" id="cd03368">
    <property type="entry name" value="Ribosomal_S12"/>
    <property type="match status" value="1"/>
</dbReference>
<dbReference type="FunFam" id="2.40.50.140:FF:000001">
    <property type="entry name" value="30S ribosomal protein S12"/>
    <property type="match status" value="1"/>
</dbReference>
<dbReference type="Gene3D" id="2.40.50.140">
    <property type="entry name" value="Nucleic acid-binding proteins"/>
    <property type="match status" value="1"/>
</dbReference>
<dbReference type="HAMAP" id="MF_00403_B">
    <property type="entry name" value="Ribosomal_uS12_B"/>
    <property type="match status" value="1"/>
</dbReference>
<dbReference type="InterPro" id="IPR012340">
    <property type="entry name" value="NA-bd_OB-fold"/>
</dbReference>
<dbReference type="InterPro" id="IPR006032">
    <property type="entry name" value="Ribosomal_uS12"/>
</dbReference>
<dbReference type="InterPro" id="IPR005679">
    <property type="entry name" value="Ribosomal_uS12_bac"/>
</dbReference>
<dbReference type="NCBIfam" id="TIGR00981">
    <property type="entry name" value="rpsL_bact"/>
    <property type="match status" value="1"/>
</dbReference>
<dbReference type="PANTHER" id="PTHR11652">
    <property type="entry name" value="30S RIBOSOMAL PROTEIN S12 FAMILY MEMBER"/>
    <property type="match status" value="1"/>
</dbReference>
<dbReference type="Pfam" id="PF00164">
    <property type="entry name" value="Ribosom_S12_S23"/>
    <property type="match status" value="1"/>
</dbReference>
<dbReference type="PIRSF" id="PIRSF002133">
    <property type="entry name" value="Ribosomal_S12/S23"/>
    <property type="match status" value="1"/>
</dbReference>
<dbReference type="PRINTS" id="PR01034">
    <property type="entry name" value="RIBOSOMALS12"/>
</dbReference>
<dbReference type="SUPFAM" id="SSF50249">
    <property type="entry name" value="Nucleic acid-binding proteins"/>
    <property type="match status" value="1"/>
</dbReference>
<dbReference type="PROSITE" id="PS00055">
    <property type="entry name" value="RIBOSOMAL_S12"/>
    <property type="match status" value="1"/>
</dbReference>
<sequence length="124" mass="13991">MPTIQQLIRDEREKITKKTKSPALKNCPQRRGVCTRVYTTTPKKPNSALRKVARVRLTSGFEVTAYIPGIGHNLQEHSVVMIRGGRVKDLPGVRYHIIRGTLDTAGVKDRRQSRSKYGAKRPKA</sequence>
<gene>
    <name type="primary">rpsL</name>
    <name type="synonym">rps12</name>
    <name type="ordered locus">syc0653_d</name>
</gene>
<comment type="function">
    <text evidence="1">With S4 and S5 plays an important role in translational accuracy.</text>
</comment>
<comment type="function">
    <text evidence="1">Interacts with and stabilizes bases of the 16S rRNA that are involved in tRNA selection in the A site and with the mRNA backbone. Located at the interface of the 30S and 50S subunits, it traverses the body of the 30S subunit contacting proteins on the other side and probably holding the rRNA structure together. The combined cluster of proteins S8, S12 and S17 appears to hold together the shoulder and platform of the 30S subunit (By similarity).</text>
</comment>
<comment type="subunit">
    <text evidence="1">Part of the 30S ribosomal subunit. Contacts proteins S8 and S17. May interact with IF1 in the 30S initiation complex (By similarity).</text>
</comment>
<comment type="similarity">
    <text evidence="3">Belongs to the universal ribosomal protein uS12 family.</text>
</comment>
<accession>P63199</accession>
<accession>P18662</accession>
<name>RS12_SYNP6</name>
<protein>
    <recommendedName>
        <fullName evidence="3">Small ribosomal subunit protein uS12</fullName>
    </recommendedName>
    <alternativeName>
        <fullName>30S ribosomal protein S12</fullName>
    </alternativeName>
</protein>